<accession>B7I973</accession>
<comment type="function">
    <text evidence="1">Transfers and isomerizes the ribose moiety from AdoMet to the 7-aminomethyl group of 7-deazaguanine (preQ1-tRNA) to give epoxyqueuosine (oQ-tRNA).</text>
</comment>
<comment type="catalytic activity">
    <reaction evidence="1">
        <text>7-aminomethyl-7-carbaguanosine(34) in tRNA + S-adenosyl-L-methionine = epoxyqueuosine(34) in tRNA + adenine + L-methionine + 2 H(+)</text>
        <dbReference type="Rhea" id="RHEA:32155"/>
        <dbReference type="Rhea" id="RHEA-COMP:10342"/>
        <dbReference type="Rhea" id="RHEA-COMP:18582"/>
        <dbReference type="ChEBI" id="CHEBI:15378"/>
        <dbReference type="ChEBI" id="CHEBI:16708"/>
        <dbReference type="ChEBI" id="CHEBI:57844"/>
        <dbReference type="ChEBI" id="CHEBI:59789"/>
        <dbReference type="ChEBI" id="CHEBI:82833"/>
        <dbReference type="ChEBI" id="CHEBI:194443"/>
        <dbReference type="EC" id="2.4.99.17"/>
    </reaction>
</comment>
<comment type="pathway">
    <text evidence="1">tRNA modification; tRNA-queuosine biosynthesis.</text>
</comment>
<comment type="subunit">
    <text evidence="1">Monomer.</text>
</comment>
<comment type="subcellular location">
    <subcellularLocation>
        <location evidence="1">Cytoplasm</location>
    </subcellularLocation>
</comment>
<comment type="similarity">
    <text evidence="1">Belongs to the QueA family.</text>
</comment>
<name>QUEA_ACIB5</name>
<organism>
    <name type="scientific">Acinetobacter baumannii (strain AB0057)</name>
    <dbReference type="NCBI Taxonomy" id="480119"/>
    <lineage>
        <taxon>Bacteria</taxon>
        <taxon>Pseudomonadati</taxon>
        <taxon>Pseudomonadota</taxon>
        <taxon>Gammaproteobacteria</taxon>
        <taxon>Moraxellales</taxon>
        <taxon>Moraxellaceae</taxon>
        <taxon>Acinetobacter</taxon>
        <taxon>Acinetobacter calcoaceticus/baumannii complex</taxon>
    </lineage>
</organism>
<protein>
    <recommendedName>
        <fullName evidence="1">S-adenosylmethionine:tRNA ribosyltransferase-isomerase</fullName>
        <ecNumber evidence="1">2.4.99.17</ecNumber>
    </recommendedName>
    <alternativeName>
        <fullName evidence="1">Queuosine biosynthesis protein QueA</fullName>
    </alternativeName>
</protein>
<evidence type="ECO:0000255" key="1">
    <source>
        <dbReference type="HAMAP-Rule" id="MF_00113"/>
    </source>
</evidence>
<dbReference type="EC" id="2.4.99.17" evidence="1"/>
<dbReference type="EMBL" id="CP001182">
    <property type="protein sequence ID" value="ACJ41982.1"/>
    <property type="molecule type" value="Genomic_DNA"/>
</dbReference>
<dbReference type="RefSeq" id="WP_001177136.1">
    <property type="nucleotide sequence ID" value="NC_011586.2"/>
</dbReference>
<dbReference type="SMR" id="B7I973"/>
<dbReference type="KEGG" id="abn:AB57_3412"/>
<dbReference type="HOGENOM" id="CLU_039110_1_0_6"/>
<dbReference type="UniPathway" id="UPA00392"/>
<dbReference type="Proteomes" id="UP000007094">
    <property type="component" value="Chromosome"/>
</dbReference>
<dbReference type="GO" id="GO:0005737">
    <property type="term" value="C:cytoplasm"/>
    <property type="evidence" value="ECO:0007669"/>
    <property type="project" value="UniProtKB-SubCell"/>
</dbReference>
<dbReference type="GO" id="GO:0051075">
    <property type="term" value="F:S-adenosylmethionine:tRNA ribosyltransferase-isomerase activity"/>
    <property type="evidence" value="ECO:0007669"/>
    <property type="project" value="UniProtKB-EC"/>
</dbReference>
<dbReference type="GO" id="GO:0008616">
    <property type="term" value="P:queuosine biosynthetic process"/>
    <property type="evidence" value="ECO:0007669"/>
    <property type="project" value="UniProtKB-UniRule"/>
</dbReference>
<dbReference type="GO" id="GO:0002099">
    <property type="term" value="P:tRNA wobble guanine modification"/>
    <property type="evidence" value="ECO:0007669"/>
    <property type="project" value="TreeGrafter"/>
</dbReference>
<dbReference type="FunFam" id="3.40.1780.10:FF:000001">
    <property type="entry name" value="S-adenosylmethionine:tRNA ribosyltransferase-isomerase"/>
    <property type="match status" value="1"/>
</dbReference>
<dbReference type="Gene3D" id="2.40.10.240">
    <property type="entry name" value="QueA-like"/>
    <property type="match status" value="1"/>
</dbReference>
<dbReference type="Gene3D" id="3.40.1780.10">
    <property type="entry name" value="QueA-like"/>
    <property type="match status" value="1"/>
</dbReference>
<dbReference type="HAMAP" id="MF_00113">
    <property type="entry name" value="QueA"/>
    <property type="match status" value="1"/>
</dbReference>
<dbReference type="InterPro" id="IPR003699">
    <property type="entry name" value="QueA"/>
</dbReference>
<dbReference type="InterPro" id="IPR042118">
    <property type="entry name" value="QueA_dom1"/>
</dbReference>
<dbReference type="InterPro" id="IPR042119">
    <property type="entry name" value="QueA_dom2"/>
</dbReference>
<dbReference type="InterPro" id="IPR036100">
    <property type="entry name" value="QueA_sf"/>
</dbReference>
<dbReference type="NCBIfam" id="NF001140">
    <property type="entry name" value="PRK00147.1"/>
    <property type="match status" value="1"/>
</dbReference>
<dbReference type="NCBIfam" id="TIGR00113">
    <property type="entry name" value="queA"/>
    <property type="match status" value="1"/>
</dbReference>
<dbReference type="PANTHER" id="PTHR30307">
    <property type="entry name" value="S-ADENOSYLMETHIONINE:TRNA RIBOSYLTRANSFERASE-ISOMERASE"/>
    <property type="match status" value="1"/>
</dbReference>
<dbReference type="PANTHER" id="PTHR30307:SF0">
    <property type="entry name" value="S-ADENOSYLMETHIONINE:TRNA RIBOSYLTRANSFERASE-ISOMERASE"/>
    <property type="match status" value="1"/>
</dbReference>
<dbReference type="Pfam" id="PF02547">
    <property type="entry name" value="Queuosine_synth"/>
    <property type="match status" value="1"/>
</dbReference>
<dbReference type="SUPFAM" id="SSF111337">
    <property type="entry name" value="QueA-like"/>
    <property type="match status" value="1"/>
</dbReference>
<feature type="chain" id="PRO_1000117520" description="S-adenosylmethionine:tRNA ribosyltransferase-isomerase">
    <location>
        <begin position="1"/>
        <end position="345"/>
    </location>
</feature>
<proteinExistence type="inferred from homology"/>
<sequence>MQLSDFSFELPDELIARYPLETRSASRLLHLDAKGQYHDHMFTDIIDLFEEGDLLVLNDTKVMKARLKGKRATGGAIEILVERMLNHTTAYCHIKASNSPKAGAELFVGADNIPVIVRGRHENLFVVEFSQPILPVLEQYGQLPIPPYFNREAEEIDTERYQTVFHNPEKIASVAAPTASLHFDEELLAELDQKGVKKTFVTLHVGAGTFMPVRTDDITNHVMHSEWCDVPQETIDLILATKARGNKVIAVGTTATRALESAAQAHGGKIAAWTGDTQIFIYPGYEFCIVDRLITNFHLPESTLLMLVSALSNRENILAAYEHAVKDRYRFFSYGDAMLIDKLEV</sequence>
<gene>
    <name evidence="1" type="primary">queA</name>
    <name type="ordered locus">AB57_3412</name>
</gene>
<keyword id="KW-0963">Cytoplasm</keyword>
<keyword id="KW-0671">Queuosine biosynthesis</keyword>
<keyword id="KW-0949">S-adenosyl-L-methionine</keyword>
<keyword id="KW-0808">Transferase</keyword>
<reference key="1">
    <citation type="journal article" date="2008" name="J. Bacteriol.">
        <title>Comparative genome sequence analysis of multidrug-resistant Acinetobacter baumannii.</title>
        <authorList>
            <person name="Adams M.D."/>
            <person name="Goglin K."/>
            <person name="Molyneaux N."/>
            <person name="Hujer K.M."/>
            <person name="Lavender H."/>
            <person name="Jamison J.J."/>
            <person name="MacDonald I.J."/>
            <person name="Martin K.M."/>
            <person name="Russo T."/>
            <person name="Campagnari A.A."/>
            <person name="Hujer A.M."/>
            <person name="Bonomo R.A."/>
            <person name="Gill S.R."/>
        </authorList>
    </citation>
    <scope>NUCLEOTIDE SEQUENCE [LARGE SCALE GENOMIC DNA]</scope>
    <source>
        <strain>AB0057</strain>
    </source>
</reference>